<accession>O81103</accession>
<protein>
    <recommendedName>
        <fullName evidence="7">Polyphenol oxidase latent form, chloroplastic</fullName>
        <shortName evidence="7">L-PaPPO</shortName>
        <shortName evidence="6">PA-PPO</shortName>
    </recommendedName>
    <component>
        <recommendedName>
            <fullName evidence="7">Polyphenol oxidase active form, chloroplastic</fullName>
            <shortName evidence="7">A-PaPPO</shortName>
            <ecNumber evidence="4 5">1.10.3.1</ecNumber>
        </recommendedName>
    </component>
</protein>
<organism>
    <name type="scientific">Prunus armeniaca</name>
    <name type="common">Apricot</name>
    <name type="synonym">Armeniaca vulgaris</name>
    <dbReference type="NCBI Taxonomy" id="36596"/>
    <lineage>
        <taxon>Eukaryota</taxon>
        <taxon>Viridiplantae</taxon>
        <taxon>Streptophyta</taxon>
        <taxon>Embryophyta</taxon>
        <taxon>Tracheophyta</taxon>
        <taxon>Spermatophyta</taxon>
        <taxon>Magnoliopsida</taxon>
        <taxon>eudicotyledons</taxon>
        <taxon>Gunneridae</taxon>
        <taxon>Pentapetalae</taxon>
        <taxon>rosids</taxon>
        <taxon>fabids</taxon>
        <taxon>Rosales</taxon>
        <taxon>Rosaceae</taxon>
        <taxon>Amygdaloideae</taxon>
        <taxon>Amygdaleae</taxon>
        <taxon>Prunus</taxon>
    </lineage>
</organism>
<feature type="transit peptide" description="Chloroplast" evidence="9">
    <location>
        <begin position="1"/>
        <end position="49"/>
    </location>
</feature>
<feature type="transit peptide" description="Thylakoid" evidence="9">
    <location>
        <begin position="50"/>
        <end position="101"/>
    </location>
</feature>
<feature type="chain" id="PRO_0000443297" description="Polyphenol oxidase latent form, chloroplastic">
    <location>
        <begin position="102"/>
        <end position="597"/>
    </location>
</feature>
<feature type="chain" id="PRO_0000443298" description="Polyphenol oxidase active form, chloroplastic">
    <location>
        <begin position="102"/>
        <end position="429"/>
    </location>
</feature>
<feature type="region of interest" description="Disordered" evidence="3">
    <location>
        <begin position="49"/>
        <end position="70"/>
    </location>
</feature>
<feature type="compositionally biased region" description="Low complexity" evidence="3">
    <location>
        <begin position="54"/>
        <end position="63"/>
    </location>
</feature>
<feature type="binding site" evidence="2">
    <location>
        <position position="188"/>
    </location>
    <ligand>
        <name>Cu cation</name>
        <dbReference type="ChEBI" id="CHEBI:23378"/>
        <label>A</label>
    </ligand>
</feature>
<feature type="binding site" evidence="2">
    <location>
        <position position="209"/>
    </location>
    <ligand>
        <name>Cu cation</name>
        <dbReference type="ChEBI" id="CHEBI:23378"/>
        <label>A</label>
    </ligand>
</feature>
<feature type="binding site" evidence="2">
    <location>
        <position position="218"/>
    </location>
    <ligand>
        <name>Cu cation</name>
        <dbReference type="ChEBI" id="CHEBI:23378"/>
        <label>A</label>
    </ligand>
</feature>
<feature type="binding site" evidence="2">
    <location>
        <position position="341"/>
    </location>
    <ligand>
        <name>Cu cation</name>
        <dbReference type="ChEBI" id="CHEBI:23378"/>
        <label>B</label>
    </ligand>
</feature>
<feature type="binding site" evidence="2">
    <location>
        <position position="345"/>
    </location>
    <ligand>
        <name>Cu cation</name>
        <dbReference type="ChEBI" id="CHEBI:23378"/>
        <label>B</label>
    </ligand>
</feature>
<feature type="binding site" evidence="2">
    <location>
        <position position="375"/>
    </location>
    <ligand>
        <name>Cu cation</name>
        <dbReference type="ChEBI" id="CHEBI:23378"/>
        <label>B</label>
    </ligand>
</feature>
<feature type="site" description="Cleavage" evidence="5">
    <location>
        <begin position="429"/>
        <end position="430"/>
    </location>
</feature>
<feature type="disulfide bond" evidence="2">
    <location>
        <begin position="112"/>
        <end position="128"/>
    </location>
</feature>
<feature type="disulfide bond" evidence="2">
    <location>
        <begin position="127"/>
        <end position="189"/>
    </location>
</feature>
<feature type="cross-link" description="2'-(S-cysteinyl)-histidine (Cys-His)" evidence="2">
    <location>
        <begin position="192"/>
        <end position="209"/>
    </location>
</feature>
<keyword id="KW-0150">Chloroplast</keyword>
<keyword id="KW-0186">Copper</keyword>
<keyword id="KW-0903">Direct protein sequencing</keyword>
<keyword id="KW-1015">Disulfide bond</keyword>
<keyword id="KW-0479">Metal-binding</keyword>
<keyword id="KW-0560">Oxidoreductase</keyword>
<keyword id="KW-0934">Plastid</keyword>
<keyword id="KW-0883">Thioether bond</keyword>
<keyword id="KW-0793">Thylakoid</keyword>
<keyword id="KW-0809">Transit peptide</keyword>
<dbReference type="EC" id="1.10.3.1" evidence="4 5"/>
<dbReference type="EMBL" id="AF020786">
    <property type="protein sequence ID" value="AAC28935.1"/>
    <property type="molecule type" value="mRNA"/>
</dbReference>
<dbReference type="SMR" id="O81103"/>
<dbReference type="SABIO-RK" id="O81103"/>
<dbReference type="GO" id="GO:0009543">
    <property type="term" value="C:chloroplast thylakoid lumen"/>
    <property type="evidence" value="ECO:0007669"/>
    <property type="project" value="UniProtKB-SubCell"/>
</dbReference>
<dbReference type="GO" id="GO:0004097">
    <property type="term" value="F:catechol oxidase activity"/>
    <property type="evidence" value="ECO:0000314"/>
    <property type="project" value="UniProtKB"/>
</dbReference>
<dbReference type="GO" id="GO:0046872">
    <property type="term" value="F:metal ion binding"/>
    <property type="evidence" value="ECO:0007669"/>
    <property type="project" value="UniProtKB-KW"/>
</dbReference>
<dbReference type="GO" id="GO:0046148">
    <property type="term" value="P:pigment biosynthetic process"/>
    <property type="evidence" value="ECO:0007669"/>
    <property type="project" value="InterPro"/>
</dbReference>
<dbReference type="FunFam" id="1.10.1280.10:FF:000007">
    <property type="entry name" value="Polyphenol oxidase, chloroplastic"/>
    <property type="match status" value="1"/>
</dbReference>
<dbReference type="Gene3D" id="1.10.1280.10">
    <property type="entry name" value="Di-copper center containing domain from catechol oxidase"/>
    <property type="match status" value="1"/>
</dbReference>
<dbReference type="InterPro" id="IPR008922">
    <property type="entry name" value="Di-copper_centre_dom_sf"/>
</dbReference>
<dbReference type="InterPro" id="IPR016213">
    <property type="entry name" value="Polyphenol_oxidase"/>
</dbReference>
<dbReference type="InterPro" id="IPR022740">
    <property type="entry name" value="Polyphenol_oxidase_C"/>
</dbReference>
<dbReference type="InterPro" id="IPR022739">
    <property type="entry name" value="Polyphenol_oxidase_cen"/>
</dbReference>
<dbReference type="InterPro" id="IPR050316">
    <property type="entry name" value="Tyrosinase/Hemocyanin"/>
</dbReference>
<dbReference type="InterPro" id="IPR002227">
    <property type="entry name" value="Tyrosinase_Cu-bd"/>
</dbReference>
<dbReference type="PANTHER" id="PTHR11474:SF95">
    <property type="entry name" value="POLYPHENOL OXIDASE, CHLOROPLASTIC-LIKE"/>
    <property type="match status" value="1"/>
</dbReference>
<dbReference type="PANTHER" id="PTHR11474">
    <property type="entry name" value="TYROSINASE FAMILY MEMBER"/>
    <property type="match status" value="1"/>
</dbReference>
<dbReference type="Pfam" id="PF12142">
    <property type="entry name" value="PPO1_DWL"/>
    <property type="match status" value="1"/>
</dbReference>
<dbReference type="Pfam" id="PF12143">
    <property type="entry name" value="PPO1_KFDV"/>
    <property type="match status" value="1"/>
</dbReference>
<dbReference type="Pfam" id="PF00264">
    <property type="entry name" value="Tyrosinase"/>
    <property type="match status" value="1"/>
</dbReference>
<dbReference type="PIRSF" id="PIRSF000290">
    <property type="entry name" value="PPO_plant"/>
    <property type="match status" value="1"/>
</dbReference>
<dbReference type="PRINTS" id="PR00092">
    <property type="entry name" value="TYROSINASE"/>
</dbReference>
<dbReference type="SUPFAM" id="SSF48056">
    <property type="entry name" value="Di-copper centre-containing domain"/>
    <property type="match status" value="1"/>
</dbReference>
<dbReference type="PROSITE" id="PS00497">
    <property type="entry name" value="TYROSINASE_1"/>
    <property type="match status" value="1"/>
</dbReference>
<dbReference type="PROSITE" id="PS00498">
    <property type="entry name" value="TYROSINASE_2"/>
    <property type="match status" value="1"/>
</dbReference>
<proteinExistence type="evidence at protein level"/>
<name>PPO_PRUAR</name>
<evidence type="ECO:0000250" key="1">
    <source>
        <dbReference type="UniProtKB" id="Q6UIL3"/>
    </source>
</evidence>
<evidence type="ECO:0000250" key="2">
    <source>
        <dbReference type="UniProtKB" id="Q9ZP19"/>
    </source>
</evidence>
<evidence type="ECO:0000256" key="3">
    <source>
        <dbReference type="SAM" id="MobiDB-lite"/>
    </source>
</evidence>
<evidence type="ECO:0000269" key="4">
    <source>
    </source>
</evidence>
<evidence type="ECO:0000269" key="5">
    <source>
    </source>
</evidence>
<evidence type="ECO:0000303" key="6">
    <source>
    </source>
</evidence>
<evidence type="ECO:0000303" key="7">
    <source>
    </source>
</evidence>
<evidence type="ECO:0000305" key="8"/>
<evidence type="ECO:0000305" key="9">
    <source>
    </source>
</evidence>
<reference key="1">
    <citation type="journal article" date="1999" name="Plant Physiol.">
        <title>Molecular cloning and characterization of apricot fruit polyphenol oxidase.</title>
        <authorList>
            <person name="Chevalier T."/>
            <person name="de Rigal D."/>
            <person name="Mbeguie-A-Mbeguie D."/>
            <person name="Gauillard F."/>
            <person name="Richard-Forget F."/>
            <person name="Fils-Lycaon B.R."/>
        </authorList>
    </citation>
    <scope>NUCLEOTIDE SEQUENCE [MRNA]</scope>
    <scope>PROTEIN SEQUENCE OF 102-119</scope>
    <scope>TISSUE SPECIFICITY</scope>
    <scope>DEVELOPMENTAL STAGE</scope>
    <scope>ACTIVITY REGULATION</scope>
    <source>
        <strain>cv. Bergeron</strain>
        <tissue>Mesocarp</tissue>
    </source>
</reference>
<reference key="2">
    <citation type="journal article" date="2017" name="J. Agric. Food Chem.">
        <title>Purification and characterization of latent polyphenol oxidase from apricot (Prunus armeniaca L.).</title>
        <authorList>
            <person name="Derardja A.E."/>
            <person name="Pretzler M."/>
            <person name="Kampatsikas I."/>
            <person name="Barkat M."/>
            <person name="Rompel A."/>
        </authorList>
    </citation>
    <scope>FUNCTION</scope>
    <scope>ACTIVITY REGULATION</scope>
    <scope>BIOPHYSICOCHEMICAL PROPERTIES</scope>
    <scope>MASS SPECTROMETRY</scope>
    <scope>PROTEOLYTIC CLEAVAGE AT LEU-429</scope>
    <scope>IDENTIFICATION BY MASS SPECTROMETRY</scope>
</reference>
<comment type="function">
    <molecule>Polyphenol oxidase active form, chloroplastic</molecule>
    <text evidence="5">Catalyzes the oxidation of mono- and o-diphenols to o-diquinones. Uses preferentially 4-methylcatechol and chlorogenic acid as substrates, followed by caffeic acid, pyrogallol, and catechol, but barely active toward dopamine and L-dopa. No activity detected with monophenols (e.g. phenol and tyramine).</text>
</comment>
<comment type="catalytic activity">
    <reaction evidence="4 5">
        <text>2 catechol + O2 = 2 1,2-benzoquinone + 2 H2O</text>
        <dbReference type="Rhea" id="RHEA:21632"/>
        <dbReference type="ChEBI" id="CHEBI:15377"/>
        <dbReference type="ChEBI" id="CHEBI:15379"/>
        <dbReference type="ChEBI" id="CHEBI:17253"/>
        <dbReference type="ChEBI" id="CHEBI:18135"/>
        <dbReference type="EC" id="1.10.3.1"/>
    </reaction>
</comment>
<comment type="cofactor">
    <cofactor evidence="2">
        <name>Cu(2+)</name>
        <dbReference type="ChEBI" id="CHEBI:29036"/>
    </cofactor>
    <text evidence="2">Binds 2 copper ions per subunit.</text>
</comment>
<comment type="activity regulation">
    <text evidence="4 5">Activated in the presence of substrate at low pH (PubMed:28812349). Specific activity fluctuates during fruit ripening, starting at immature-green stage, reaching a peak at the breaker stage, followed by a sharp decrease until the half-ripe stage to remain stable during the following development stages (PubMed:10198084). Triggered by CuSO(4) and by low concentrations of SDS. Repressed by several inhibitors including 4-hexylresorcinol, ascorbic acid, benzoic acid, kojic acid, glutathione (reduced form), L-cysteine and sodium metabisulfite. Inhibited by various salt such as FeSO(4), KCl, NaCl, CaCl(2), MnCl(2), NiCl(2) and AlCl(3). Spontaneously activated during storage at 4 degrees Celsius (PubMed:28812349).</text>
</comment>
<comment type="biophysicochemical properties">
    <kinetics>
        <KM evidence="5">2 mM for 4-methylcatechol</KM>
        <KM evidence="5">2.7 mM for chlorogenic acid</KM>
        <KM evidence="5">5.3 mM for catechol</KM>
        <KM evidence="5">11 mM for pyrogallol</KM>
        <text evidence="5">kcat is 700 sec(-1) with 4-methylcatechol as substrate. kcat is 1400 sec(-1) with chlorogenic acid as substrate. kcat is 210 sec(-1) with catechol as substrate. kcat is 590 sec(-1) with pyrogallol as substrate.</text>
    </kinetics>
    <phDependence>
        <text evidence="5">Optimum pH is 4.5 with catechol as substrate.</text>
    </phDependence>
    <temperatureDependence>
        <text evidence="5">Optimum temperature is 45 degrees Celsius with catechol as substrate. Completely inactivated after heating at 70 degrees Celsius for 10 min.</text>
    </temperatureDependence>
</comment>
<comment type="subunit">
    <text evidence="2">Monomer.</text>
</comment>
<comment type="subcellular location">
    <subcellularLocation>
        <location evidence="1">Plastid</location>
        <location evidence="1">Chloroplast thylakoid lumen</location>
    </subcellularLocation>
</comment>
<comment type="tissue specificity">
    <text evidence="4">Expressed in immature-green fruit.</text>
</comment>
<comment type="developmental stage">
    <text evidence="4">Transcripts are highly expressed in young, immature-green fruit, but turned off early in the ripening process. By contrast, protein levels seem stable throughout fruit ripening.</text>
</comment>
<comment type="mass spectrometry">
    <molecule>Polyphenol oxidase active form, chloroplastic</molecule>
</comment>
<comment type="similarity">
    <text evidence="8">Belongs to the tyrosinase family.</text>
</comment>
<gene>
    <name evidence="6" type="primary">PPO</name>
</gene>
<sequence>MATAPSPTTMGTYSSLISTNSFSTFLPNKSQLSLSGKSKHYVARRSSISCKATNNNNSNNQNEQQEESSRLLGKLDRRNILIGLGGLYGATTLDRKPFAFADPIAPPDLTTCKPAEITPGGSETVPCCPPVTTKIKTFKPDLSIPLRTSPAAHQVTDEYLAKFKKAQAAMRALPDDDPRSMVQQAKVHCAYCNGAYPQVGFTDNDIQVHFSWLFFPFHRMYLYFYERILGKLIDDPTFALPYWNWDSPVGFPIPDIYTDTSSPLYDQYRNADHQPPVLVDLSYGGKDDDVDEQTRIDENLAIMYRQMVSGAKTPDLFFGHAYRAGNLNTGKYPGTIENMPHNNIHIWVGDPSQTHQEDMGNFYSAGRDPLFYAHHANVDRMWNIWKTLGGKRKDITDTDWLDAEFLFYDENAELVRVKVRDSLEPEKQLRYNYEPVSLPWLFTKPTARKTKNKTKAKVAATQLTSKFPATLVEVTTVEVARPKPRKRSKKEKVDEEELLIIKDIEFEGTEAVKFDVFINDDAESLSRRDKSEFAGSFVHVPQGKTTKAKTKTNLKLGITDLLEDLGAEDDSSVLVTLVPRVSNSPITIGGFKIEYSS</sequence>